<reference key="1">
    <citation type="journal article" date="1997" name="Nature">
        <title>The complete genome sequence of the hyperthermophilic, sulphate-reducing archaeon Archaeoglobus fulgidus.</title>
        <authorList>
            <person name="Klenk H.-P."/>
            <person name="Clayton R.A."/>
            <person name="Tomb J.-F."/>
            <person name="White O."/>
            <person name="Nelson K.E."/>
            <person name="Ketchum K.A."/>
            <person name="Dodson R.J."/>
            <person name="Gwinn M.L."/>
            <person name="Hickey E.K."/>
            <person name="Peterson J.D."/>
            <person name="Richardson D.L."/>
            <person name="Kerlavage A.R."/>
            <person name="Graham D.E."/>
            <person name="Kyrpides N.C."/>
            <person name="Fleischmann R.D."/>
            <person name="Quackenbush J."/>
            <person name="Lee N.H."/>
            <person name="Sutton G.G."/>
            <person name="Gill S.R."/>
            <person name="Kirkness E.F."/>
            <person name="Dougherty B.A."/>
            <person name="McKenney K."/>
            <person name="Adams M.D."/>
            <person name="Loftus B.J."/>
            <person name="Peterson S.N."/>
            <person name="Reich C.I."/>
            <person name="McNeil L.K."/>
            <person name="Badger J.H."/>
            <person name="Glodek A."/>
            <person name="Zhou L."/>
            <person name="Overbeek R."/>
            <person name="Gocayne J.D."/>
            <person name="Weidman J.F."/>
            <person name="McDonald L.A."/>
            <person name="Utterback T.R."/>
            <person name="Cotton M.D."/>
            <person name="Spriggs T."/>
            <person name="Artiach P."/>
            <person name="Kaine B.P."/>
            <person name="Sykes S.M."/>
            <person name="Sadow P.W."/>
            <person name="D'Andrea K.P."/>
            <person name="Bowman C."/>
            <person name="Fujii C."/>
            <person name="Garland S.A."/>
            <person name="Mason T.M."/>
            <person name="Olsen G.J."/>
            <person name="Fraser C.M."/>
            <person name="Smith H.O."/>
            <person name="Woese C.R."/>
            <person name="Venter J.C."/>
        </authorList>
    </citation>
    <scope>NUCLEOTIDE SEQUENCE [LARGE SCALE GENOMIC DNA]</scope>
    <source>
        <strain>ATCC 49558 / DSM 4304 / JCM 9628 / NBRC 100126 / VC-16</strain>
    </source>
</reference>
<protein>
    <recommendedName>
        <fullName>Probable transposase for insertion sequence element ISA1214</fullName>
    </recommendedName>
</protein>
<comment type="function">
    <text evidence="1">Involved in the transposition of the insertion sequence ISA1214.</text>
</comment>
<comment type="similarity">
    <text evidence="2">Belongs to the transposase 11 family.</text>
</comment>
<accession>O35003</accession>
<sequence length="322" mass="38307">MNLGFRVTGKFVRELLDVLDEIAEEIRQEEKEKYPYTEWERKREVVKERLRKLPEYVREAISVITVQKRVGRPKKVDLEKRVMLFLFARLMDKSNRDIEELLELFEPLFGIKVSYKTIERLYSDEEVRMALHNLFILLLREEGVSGDFSGDGTGYSLTITKHYRSNPKRKGKDFRYVFRIIDIDTGMYVGFGYSDRSEKDAFEKALGMLKSMGVKVNSISLDKYYSSRKTLRLFDAETAVYVIPKRNLARIGFDWLRVIERIVEAPYRFLKRYFKRNLSEAGFSADKRRFGWLIRQRREDRREMALFAVGLWHNVFAVRVVR</sequence>
<feature type="chain" id="PRO_0000173311" description="Probable transposase for insertion sequence element ISA1214">
    <location>
        <begin position="1"/>
        <end position="322"/>
    </location>
</feature>
<gene>
    <name type="ordered locus">AF_0279</name>
</gene>
<gene>
    <name type="ordered locus">AF_0306</name>
</gene>
<gene>
    <name type="ordered locus">AF_0642</name>
</gene>
<gene>
    <name type="ordered locus">AF_0858</name>
</gene>
<gene>
    <name type="ordered locus">AF_2092</name>
</gene>
<evidence type="ECO:0000250" key="1"/>
<evidence type="ECO:0000305" key="2"/>
<name>T1214_ARCFU</name>
<proteinExistence type="inferred from homology"/>
<organism>
    <name type="scientific">Archaeoglobus fulgidus (strain ATCC 49558 / DSM 4304 / JCM 9628 / NBRC 100126 / VC-16)</name>
    <dbReference type="NCBI Taxonomy" id="224325"/>
    <lineage>
        <taxon>Archaea</taxon>
        <taxon>Methanobacteriati</taxon>
        <taxon>Methanobacteriota</taxon>
        <taxon>Archaeoglobi</taxon>
        <taxon>Archaeoglobales</taxon>
        <taxon>Archaeoglobaceae</taxon>
        <taxon>Archaeoglobus</taxon>
    </lineage>
</organism>
<keyword id="KW-0233">DNA recombination</keyword>
<keyword id="KW-0238">DNA-binding</keyword>
<keyword id="KW-1185">Reference proteome</keyword>
<keyword id="KW-0814">Transposable element</keyword>
<keyword id="KW-0815">Transposition</keyword>
<dbReference type="EMBL" id="AE000782">
    <property type="protein sequence ID" value="AAB89162.1"/>
    <property type="molecule type" value="Genomic_DNA"/>
</dbReference>
<dbReference type="EMBL" id="AE000782">
    <property type="protein sequence ID" value="AAB90382.1"/>
    <property type="molecule type" value="Genomic_DNA"/>
</dbReference>
<dbReference type="EMBL" id="AE000782">
    <property type="protein sequence ID" value="AAB90595.1"/>
    <property type="molecule type" value="Genomic_DNA"/>
</dbReference>
<dbReference type="EMBL" id="AE000782">
    <property type="protein sequence ID" value="AAB90928.1"/>
    <property type="molecule type" value="Genomic_DNA"/>
</dbReference>
<dbReference type="EMBL" id="AE000782">
    <property type="protein sequence ID" value="AAB90952.1"/>
    <property type="molecule type" value="Genomic_DNA"/>
</dbReference>
<dbReference type="PIR" id="G69284">
    <property type="entry name" value="G69284"/>
</dbReference>
<dbReference type="RefSeq" id="WP_010877790.1">
    <property type="nucleotide sequence ID" value="NC_000917.1"/>
</dbReference>
<dbReference type="SMR" id="O35003"/>
<dbReference type="STRING" id="224325.AF_0279"/>
<dbReference type="PaxDb" id="224325-AF_0279"/>
<dbReference type="EnsemblBacteria" id="AAB89162">
    <property type="protein sequence ID" value="AAB89162"/>
    <property type="gene ID" value="AF_2092"/>
</dbReference>
<dbReference type="EnsemblBacteria" id="AAB90382">
    <property type="protein sequence ID" value="AAB90382"/>
    <property type="gene ID" value="AF_0858"/>
</dbReference>
<dbReference type="EnsemblBacteria" id="AAB90595">
    <property type="protein sequence ID" value="AAB90595"/>
    <property type="gene ID" value="AF_0642"/>
</dbReference>
<dbReference type="EnsemblBacteria" id="AAB90928">
    <property type="protein sequence ID" value="AAB90928"/>
    <property type="gene ID" value="AF_0306"/>
</dbReference>
<dbReference type="EnsemblBacteria" id="AAB90952">
    <property type="protein sequence ID" value="AAB90952"/>
    <property type="gene ID" value="AF_0279"/>
</dbReference>
<dbReference type="GeneID" id="31757495"/>
<dbReference type="KEGG" id="afu:AF_0279"/>
<dbReference type="KEGG" id="afu:AF_0306"/>
<dbReference type="KEGG" id="afu:AF_0642"/>
<dbReference type="KEGG" id="afu:AF_0858"/>
<dbReference type="KEGG" id="afu:AF_2092"/>
<dbReference type="eggNOG" id="arCOG07762">
    <property type="taxonomic scope" value="Archaea"/>
</dbReference>
<dbReference type="HOGENOM" id="CLU_873197_0_0_2"/>
<dbReference type="OrthoDB" id="43033at2157"/>
<dbReference type="Proteomes" id="UP000002199">
    <property type="component" value="Chromosome"/>
</dbReference>
<dbReference type="GO" id="GO:0003677">
    <property type="term" value="F:DNA binding"/>
    <property type="evidence" value="ECO:0007669"/>
    <property type="project" value="UniProtKB-KW"/>
</dbReference>
<dbReference type="GO" id="GO:0006310">
    <property type="term" value="P:DNA recombination"/>
    <property type="evidence" value="ECO:0007669"/>
    <property type="project" value="UniProtKB-KW"/>
</dbReference>
<dbReference type="GO" id="GO:0032196">
    <property type="term" value="P:transposition"/>
    <property type="evidence" value="ECO:0007669"/>
    <property type="project" value="UniProtKB-KW"/>
</dbReference>